<reference key="1">
    <citation type="journal article" date="2009" name="Genome Biol.">
        <title>A whole-genome assembly of the domestic cow, Bos taurus.</title>
        <authorList>
            <person name="Zimin A.V."/>
            <person name="Delcher A.L."/>
            <person name="Florea L."/>
            <person name="Kelley D.R."/>
            <person name="Schatz M.C."/>
            <person name="Puiu D."/>
            <person name="Hanrahan F."/>
            <person name="Pertea G."/>
            <person name="Van Tassell C.P."/>
            <person name="Sonstegard T.S."/>
            <person name="Marcais G."/>
            <person name="Roberts M."/>
            <person name="Subramanian P."/>
            <person name="Yorke J.A."/>
            <person name="Salzberg S.L."/>
        </authorList>
    </citation>
    <scope>NUCLEOTIDE SEQUENCE [LARGE SCALE GENOMIC DNA]</scope>
    <source>
        <strain>Hereford</strain>
    </source>
</reference>
<reference key="2">
    <citation type="submission" date="2007-07" db="EMBL/GenBank/DDBJ databases">
        <authorList>
            <consortium name="NIH - Mammalian Gene Collection (MGC) project"/>
        </authorList>
    </citation>
    <scope>NUCLEOTIDE SEQUENCE [LARGE SCALE MRNA]</scope>
    <source>
        <strain>Hereford</strain>
        <tissue>Hypothalamus</tissue>
    </source>
</reference>
<feature type="chain" id="PRO_0000418810" description="Ganglioside-induced differentiation-associated protein 1">
    <location>
        <begin position="1"/>
        <end position="358"/>
    </location>
</feature>
<feature type="transmembrane region" description="Helical" evidence="4">
    <location>
        <begin position="292"/>
        <end position="312"/>
    </location>
</feature>
<feature type="transmembrane region" description="Helical" evidence="4">
    <location>
        <begin position="320"/>
        <end position="340"/>
    </location>
</feature>
<feature type="domain" description="GST N-terminal">
    <location>
        <begin position="24"/>
        <end position="105"/>
    </location>
</feature>
<feature type="domain" description="GST C-terminal">
    <location>
        <begin position="153"/>
        <end position="309"/>
    </location>
</feature>
<feature type="region of interest" description="Required for mitochondrial localization" evidence="1">
    <location>
        <begin position="320"/>
        <end position="358"/>
    </location>
</feature>
<feature type="modified residue" description="N6-acetyllysine; alternate" evidence="3">
    <location>
        <position position="203"/>
    </location>
</feature>
<feature type="cross-link" description="Glycyl lysine isopeptide (Lys-Gly) (interchain with G-Cter in ubiquitin)" evidence="3">
    <location>
        <position position="50"/>
    </location>
</feature>
<feature type="cross-link" description="Glycyl lysine isopeptide (Lys-Gly) (interchain with G-Cter in ubiquitin)" evidence="3">
    <location>
        <position position="172"/>
    </location>
</feature>
<feature type="cross-link" description="Glycyl lysine isopeptide (Lys-Gly) (interchain with G-Cter in ubiquitin)" evidence="3">
    <location>
        <position position="173"/>
    </location>
</feature>
<feature type="cross-link" description="Glycyl lysine isopeptide (Lys-Gly) (interchain with G-Cter in ubiquitin)" evidence="3">
    <location>
        <position position="188"/>
    </location>
</feature>
<feature type="cross-link" description="Glycyl lysine isopeptide (Lys-Gly) (interchain with G-Cter in ubiquitin)" evidence="3">
    <location>
        <position position="190"/>
    </location>
</feature>
<feature type="cross-link" description="Glycyl lysine isopeptide (Lys-Gly) (interchain with G-Cter in ubiquitin); alternate" evidence="3">
    <location>
        <position position="203"/>
    </location>
</feature>
<feature type="cross-link" description="Glycyl lysine isopeptide (Lys-Gly) (interchain with G-Cter in ubiquitin)" evidence="3">
    <location>
        <position position="206"/>
    </location>
</feature>
<feature type="cross-link" description="Glycyl lysine isopeptide (Lys-Gly) (interchain with G-Cter in ubiquitin)" evidence="3">
    <location>
        <position position="207"/>
    </location>
</feature>
<feature type="cross-link" description="Glycyl lysine isopeptide (Lys-Gly) (interchain with G-Cter in ubiquitin)" evidence="3">
    <location>
        <position position="214"/>
    </location>
</feature>
<protein>
    <recommendedName>
        <fullName>Ganglioside-induced differentiation-associated protein 1</fullName>
        <shortName>GDAP1</shortName>
    </recommendedName>
</protein>
<organism>
    <name type="scientific">Bos taurus</name>
    <name type="common">Bovine</name>
    <dbReference type="NCBI Taxonomy" id="9913"/>
    <lineage>
        <taxon>Eukaryota</taxon>
        <taxon>Metazoa</taxon>
        <taxon>Chordata</taxon>
        <taxon>Craniata</taxon>
        <taxon>Vertebrata</taxon>
        <taxon>Euteleostomi</taxon>
        <taxon>Mammalia</taxon>
        <taxon>Eutheria</taxon>
        <taxon>Laurasiatheria</taxon>
        <taxon>Artiodactyla</taxon>
        <taxon>Ruminantia</taxon>
        <taxon>Pecora</taxon>
        <taxon>Bovidae</taxon>
        <taxon>Bovinae</taxon>
        <taxon>Bos</taxon>
    </lineage>
</organism>
<name>GDAP1_BOVIN</name>
<dbReference type="EMBL" id="DAAA02038855">
    <property type="status" value="NOT_ANNOTATED_CDS"/>
    <property type="molecule type" value="Genomic_DNA"/>
</dbReference>
<dbReference type="EMBL" id="BC150048">
    <property type="protein sequence ID" value="AAI50049.1"/>
    <property type="molecule type" value="mRNA"/>
</dbReference>
<dbReference type="RefSeq" id="NP_001094692.1">
    <property type="nucleotide sequence ID" value="NM_001101222.2"/>
</dbReference>
<dbReference type="RefSeq" id="XP_059749323.1">
    <property type="nucleotide sequence ID" value="XM_059893340.1"/>
</dbReference>
<dbReference type="SMR" id="A6QQZ0"/>
<dbReference type="FunCoup" id="A6QQZ0">
    <property type="interactions" value="794"/>
</dbReference>
<dbReference type="STRING" id="9913.ENSBTAP00000016739"/>
<dbReference type="PaxDb" id="9913-ENSBTAP00000016739"/>
<dbReference type="Ensembl" id="ENSBTAT00000016739.6">
    <property type="protein sequence ID" value="ENSBTAP00000016739.5"/>
    <property type="gene ID" value="ENSBTAG00000012608.7"/>
</dbReference>
<dbReference type="GeneID" id="613472"/>
<dbReference type="KEGG" id="bta:613472"/>
<dbReference type="CTD" id="54332"/>
<dbReference type="VEuPathDB" id="HostDB:ENSBTAG00000012608"/>
<dbReference type="VGNC" id="VGNC:29295">
    <property type="gene designation" value="GDAP1"/>
</dbReference>
<dbReference type="eggNOG" id="KOG4420">
    <property type="taxonomic scope" value="Eukaryota"/>
</dbReference>
<dbReference type="GeneTree" id="ENSGT00940000159124"/>
<dbReference type="HOGENOM" id="CLU_049129_0_0_1"/>
<dbReference type="InParanoid" id="A6QQZ0"/>
<dbReference type="OMA" id="LHCEEYD"/>
<dbReference type="OrthoDB" id="249703at2759"/>
<dbReference type="TreeFam" id="TF327072"/>
<dbReference type="Reactome" id="R-BTA-9603798">
    <property type="pathway name" value="Class I peroxisomal membrane protein import"/>
</dbReference>
<dbReference type="Proteomes" id="UP000009136">
    <property type="component" value="Chromosome 14"/>
</dbReference>
<dbReference type="Bgee" id="ENSBTAG00000012608">
    <property type="expression patterns" value="Expressed in occipital lobe and 97 other cell types or tissues"/>
</dbReference>
<dbReference type="GO" id="GO:0005829">
    <property type="term" value="C:cytosol"/>
    <property type="evidence" value="ECO:0007669"/>
    <property type="project" value="Ensembl"/>
</dbReference>
<dbReference type="GO" id="GO:0005741">
    <property type="term" value="C:mitochondrial outer membrane"/>
    <property type="evidence" value="ECO:0000250"/>
    <property type="project" value="UniProtKB"/>
</dbReference>
<dbReference type="GO" id="GO:0000266">
    <property type="term" value="P:mitochondrial fission"/>
    <property type="evidence" value="ECO:0000250"/>
    <property type="project" value="UniProtKB"/>
</dbReference>
<dbReference type="GO" id="GO:0008053">
    <property type="term" value="P:mitochondrial fusion"/>
    <property type="evidence" value="ECO:0000318"/>
    <property type="project" value="GO_Central"/>
</dbReference>
<dbReference type="GO" id="GO:0006626">
    <property type="term" value="P:protein targeting to mitochondrion"/>
    <property type="evidence" value="ECO:0000250"/>
    <property type="project" value="UniProtKB"/>
</dbReference>
<dbReference type="GO" id="GO:0032526">
    <property type="term" value="P:response to retinoic acid"/>
    <property type="evidence" value="ECO:0007669"/>
    <property type="project" value="Ensembl"/>
</dbReference>
<dbReference type="CDD" id="cd10303">
    <property type="entry name" value="GST_C_GDAP1"/>
    <property type="match status" value="1"/>
</dbReference>
<dbReference type="CDD" id="cd03052">
    <property type="entry name" value="GST_N_GDAP1"/>
    <property type="match status" value="1"/>
</dbReference>
<dbReference type="FunFam" id="1.20.1050.10:FF:000022">
    <property type="entry name" value="ganglioside-induced differentiation-associated protein 1 isoform X1"/>
    <property type="match status" value="1"/>
</dbReference>
<dbReference type="FunFam" id="3.40.30.10:FF:000113">
    <property type="entry name" value="ganglioside-induced differentiation-associated protein 1 isoform X1"/>
    <property type="match status" value="1"/>
</dbReference>
<dbReference type="Gene3D" id="1.20.1050.10">
    <property type="match status" value="1"/>
</dbReference>
<dbReference type="Gene3D" id="3.40.30.10">
    <property type="entry name" value="Glutaredoxin"/>
    <property type="match status" value="1"/>
</dbReference>
<dbReference type="InterPro" id="IPR010987">
    <property type="entry name" value="Glutathione-S-Trfase_C-like"/>
</dbReference>
<dbReference type="InterPro" id="IPR036282">
    <property type="entry name" value="Glutathione-S-Trfase_C_sf"/>
</dbReference>
<dbReference type="InterPro" id="IPR040079">
    <property type="entry name" value="Glutathione_S-Trfase"/>
</dbReference>
<dbReference type="InterPro" id="IPR004045">
    <property type="entry name" value="Glutathione_S-Trfase_N"/>
</dbReference>
<dbReference type="InterPro" id="IPR034336">
    <property type="entry name" value="GST_C_GDAP1"/>
</dbReference>
<dbReference type="InterPro" id="IPR036249">
    <property type="entry name" value="Thioredoxin-like_sf"/>
</dbReference>
<dbReference type="PANTHER" id="PTHR44188:SF3">
    <property type="entry name" value="GANGLIOSIDE-INDUCED DIFFERENTIATION-ASSOCIATED PROTEIN 1"/>
    <property type="match status" value="1"/>
</dbReference>
<dbReference type="PANTHER" id="PTHR44188">
    <property type="entry name" value="GDAP1, ISOFORM A"/>
    <property type="match status" value="1"/>
</dbReference>
<dbReference type="Pfam" id="PF13410">
    <property type="entry name" value="GST_C_2"/>
    <property type="match status" value="1"/>
</dbReference>
<dbReference type="Pfam" id="PF13417">
    <property type="entry name" value="GST_N_3"/>
    <property type="match status" value="1"/>
</dbReference>
<dbReference type="SFLD" id="SFLDS00019">
    <property type="entry name" value="Glutathione_Transferase_(cytos"/>
    <property type="match status" value="1"/>
</dbReference>
<dbReference type="SFLD" id="SFLDG00358">
    <property type="entry name" value="Main_(cytGST)"/>
    <property type="match status" value="1"/>
</dbReference>
<dbReference type="SUPFAM" id="SSF47616">
    <property type="entry name" value="GST C-terminal domain-like"/>
    <property type="match status" value="1"/>
</dbReference>
<dbReference type="SUPFAM" id="SSF52833">
    <property type="entry name" value="Thioredoxin-like"/>
    <property type="match status" value="1"/>
</dbReference>
<dbReference type="PROSITE" id="PS50405">
    <property type="entry name" value="GST_CTER"/>
    <property type="match status" value="1"/>
</dbReference>
<dbReference type="PROSITE" id="PS50404">
    <property type="entry name" value="GST_NTER"/>
    <property type="match status" value="1"/>
</dbReference>
<gene>
    <name type="primary">GDAP1</name>
</gene>
<proteinExistence type="evidence at transcript level"/>
<evidence type="ECO:0000250" key="1"/>
<evidence type="ECO:0000250" key="2">
    <source>
        <dbReference type="UniProtKB" id="O88741"/>
    </source>
</evidence>
<evidence type="ECO:0000250" key="3">
    <source>
        <dbReference type="UniProtKB" id="Q8TB36"/>
    </source>
</evidence>
<evidence type="ECO:0000255" key="4"/>
<evidence type="ECO:0000305" key="5"/>
<accession>A6QQZ0</accession>
<comment type="function">
    <text evidence="1">Regulates the mitochondrial network by promoting mitochondrial fission.</text>
</comment>
<comment type="subunit">
    <text evidence="1">Homodimer.</text>
</comment>
<comment type="subcellular location">
    <subcellularLocation>
        <location evidence="3">Mitochondrion outer membrane</location>
        <topology evidence="3">Multi-pass membrane protein</topology>
    </subcellularLocation>
    <subcellularLocation>
        <location evidence="2">Cytoplasm</location>
    </subcellularLocation>
</comment>
<comment type="PTM">
    <text evidence="3">Ubiquitinated by PRKN during mitophagy, leading to its degradation and enhancement of mitophagy. Deubiquitinated by USP30.</text>
</comment>
<comment type="similarity">
    <text evidence="5">Belongs to the GST superfamily.</text>
</comment>
<comment type="caution">
    <text evidence="5">While belonging to the GST superfamily, it lacks glutathione transferase activity.</text>
</comment>
<keyword id="KW-0007">Acetylation</keyword>
<keyword id="KW-0175">Coiled coil</keyword>
<keyword id="KW-0963">Cytoplasm</keyword>
<keyword id="KW-1017">Isopeptide bond</keyword>
<keyword id="KW-0472">Membrane</keyword>
<keyword id="KW-0496">Mitochondrion</keyword>
<keyword id="KW-1000">Mitochondrion outer membrane</keyword>
<keyword id="KW-1185">Reference proteome</keyword>
<keyword id="KW-0812">Transmembrane</keyword>
<keyword id="KW-1133">Transmembrane helix</keyword>
<keyword id="KW-0832">Ubl conjugation</keyword>
<sequence>MARRQDEQRGGAPLIAEGKSDAEVKLILYHWTHSFSSQKVRLVIAEKALKCEEHDVSLPLSEHNEPWFMRLNSTGEVPVLIHGENIICEATQIIDYLEQTFLDEKTPRLMPDKGSMYYPRVQHYRELLDSLPMDAYTHGCILHPELTVDSMIPAYATTRIRSQIGNTESELKKLAEENPDLQEAYIAKQKRLKSKLLDHDNVKYLKKILDELEKVLDQVETELQRRNEETPEEGRQPWLCGESFTLADVSLAVTLHRLKFLGFARRNWGNGKRPNLETYYERVLKRKTFNKVLGHVNNILISAVLPTAFRVAKKRAPKVLGTTLVVGLLAGMGYFAFMLFRKRLGSMILALRPRPNYF</sequence>